<proteinExistence type="evidence at protein level"/>
<gene>
    <name type="primary">Ak1</name>
</gene>
<keyword id="KW-0067">ATP-binding</keyword>
<keyword id="KW-0963">Cytoplasm</keyword>
<keyword id="KW-0418">Kinase</keyword>
<keyword id="KW-0547">Nucleotide-binding</keyword>
<keyword id="KW-0597">Phosphoprotein</keyword>
<keyword id="KW-1185">Reference proteome</keyword>
<keyword id="KW-0808">Transferase</keyword>
<name>KAD1_MESAU</name>
<dbReference type="EC" id="2.7.4.3" evidence="1 4"/>
<dbReference type="EC" id="2.7.4.4" evidence="1"/>
<dbReference type="EC" id="2.7.4.6" evidence="1 4"/>
<dbReference type="SMR" id="P86195"/>
<dbReference type="Proteomes" id="UP000189706">
    <property type="component" value="Unplaced"/>
</dbReference>
<dbReference type="GO" id="GO:0005737">
    <property type="term" value="C:cytoplasm"/>
    <property type="evidence" value="ECO:0007669"/>
    <property type="project" value="UniProtKB-SubCell"/>
</dbReference>
<dbReference type="GO" id="GO:0004017">
    <property type="term" value="F:adenylate kinase activity"/>
    <property type="evidence" value="ECO:0007669"/>
    <property type="project" value="UniProtKB-EC"/>
</dbReference>
<dbReference type="GO" id="GO:0005524">
    <property type="term" value="F:ATP binding"/>
    <property type="evidence" value="ECO:0007669"/>
    <property type="project" value="UniProtKB-KW"/>
</dbReference>
<dbReference type="GO" id="GO:0047506">
    <property type="term" value="F:deoxyadenylate kinase activity"/>
    <property type="evidence" value="ECO:0007669"/>
    <property type="project" value="RHEA"/>
</dbReference>
<dbReference type="GO" id="GO:0004550">
    <property type="term" value="F:nucleoside diphosphate kinase activity"/>
    <property type="evidence" value="ECO:0000250"/>
    <property type="project" value="UniProtKB"/>
</dbReference>
<dbReference type="Gene3D" id="3.40.50.300">
    <property type="entry name" value="P-loop containing nucleotide triphosphate hydrolases"/>
    <property type="match status" value="1"/>
</dbReference>
<dbReference type="InterPro" id="IPR000850">
    <property type="entry name" value="Adenylat/UMP-CMP_kin"/>
</dbReference>
<dbReference type="InterPro" id="IPR027417">
    <property type="entry name" value="P-loop_NTPase"/>
</dbReference>
<dbReference type="PANTHER" id="PTHR23359">
    <property type="entry name" value="NUCLEOTIDE KINASE"/>
    <property type="match status" value="1"/>
</dbReference>
<dbReference type="Pfam" id="PF13207">
    <property type="entry name" value="AAA_17"/>
    <property type="match status" value="1"/>
</dbReference>
<dbReference type="SUPFAM" id="SSF52540">
    <property type="entry name" value="P-loop containing nucleoside triphosphate hydrolases"/>
    <property type="match status" value="1"/>
</dbReference>
<organism>
    <name type="scientific">Mesocricetus auratus</name>
    <name type="common">Golden hamster</name>
    <dbReference type="NCBI Taxonomy" id="10036"/>
    <lineage>
        <taxon>Eukaryota</taxon>
        <taxon>Metazoa</taxon>
        <taxon>Chordata</taxon>
        <taxon>Craniata</taxon>
        <taxon>Vertebrata</taxon>
        <taxon>Euteleostomi</taxon>
        <taxon>Mammalia</taxon>
        <taxon>Eutheria</taxon>
        <taxon>Euarchontoglires</taxon>
        <taxon>Glires</taxon>
        <taxon>Rodentia</taxon>
        <taxon>Myomorpha</taxon>
        <taxon>Muroidea</taxon>
        <taxon>Cricetidae</taxon>
        <taxon>Cricetinae</taxon>
        <taxon>Mesocricetus</taxon>
    </lineage>
</organism>
<protein>
    <recommendedName>
        <fullName evidence="2">Adenylate kinase isoenzyme 1</fullName>
        <shortName evidence="2">AK 1</shortName>
        <ecNumber evidence="1 4">2.7.4.3</ecNumber>
        <ecNumber evidence="1">2.7.4.4</ecNumber>
        <ecNumber evidence="1 4">2.7.4.6</ecNumber>
    </recommendedName>
    <alternativeName>
        <fullName evidence="2">ATP-AMP transphosphorylase 1</fullName>
    </alternativeName>
    <alternativeName>
        <fullName>ATP:AMP phosphotransferase</fullName>
    </alternativeName>
    <alternativeName>
        <fullName>Adenylate monophosphate kinase</fullName>
    </alternativeName>
    <alternativeName>
        <fullName evidence="2">Myokinase</fullName>
    </alternativeName>
</protein>
<feature type="chain" id="PRO_0000394397" description="Adenylate kinase isoenzyme 1">
    <location>
        <begin position="1" status="less than"/>
        <end position="60" status="greater than"/>
    </location>
</feature>
<feature type="region of interest" description="NMP" evidence="1">
    <location>
        <begin position="25"/>
        <end position="53"/>
    </location>
</feature>
<feature type="binding site" evidence="1">
    <location>
        <begin position="9"/>
        <end position="14"/>
    </location>
    <ligand>
        <name>ATP</name>
        <dbReference type="ChEBI" id="CHEBI:30616"/>
    </ligand>
</feature>
<feature type="binding site" evidence="1">
    <location>
        <position position="26"/>
    </location>
    <ligand>
        <name>AMP</name>
        <dbReference type="ChEBI" id="CHEBI:456215"/>
    </ligand>
</feature>
<feature type="binding site" evidence="1">
    <location>
        <position position="31"/>
    </location>
    <ligand>
        <name>AMP</name>
        <dbReference type="ChEBI" id="CHEBI:456215"/>
    </ligand>
</feature>
<feature type="modified residue" description="Phosphoserine" evidence="1">
    <location>
        <position position="25"/>
    </location>
</feature>
<feature type="non-consecutive residues" evidence="5">
    <location>
        <begin position="18"/>
        <end position="19"/>
    </location>
</feature>
<feature type="non-consecutive residues" evidence="5">
    <location>
        <begin position="31"/>
        <end position="32"/>
    </location>
</feature>
<feature type="non-consecutive residues" evidence="5">
    <location>
        <begin position="45"/>
        <end position="46"/>
    </location>
</feature>
<feature type="non-consecutive residues" evidence="5">
    <location>
        <begin position="53"/>
        <end position="54"/>
    </location>
</feature>
<feature type="non-terminal residue">
    <location>
        <position position="1"/>
    </location>
</feature>
<feature type="non-terminal residue">
    <location>
        <position position="60"/>
    </location>
</feature>
<sequence length="60" mass="6735">IIFVVGGPGSGKGTQCEKYGYTHLSTGDLLRVDSSNGFLIDGYPRQGEEFERKRLETYYK</sequence>
<comment type="function">
    <text evidence="1 3 4">Catalyzes the reversible transfer of the terminal phosphate group between ATP and AMP. Also displays broad nucleoside diphosphate kinase activity. Plays an important role in cellular energy homeostasis and in adenine nucleotide metabolism (By similarity). Also catalyzes at a very low rate the synthesis of thiamine triphosphate (ThTP) from thiamine diphosphate (ThDP) and ADP (By similarity).</text>
</comment>
<comment type="catalytic activity">
    <reaction evidence="1">
        <text>a ribonucleoside 5'-phosphate + ATP = a ribonucleoside 5'-diphosphate + ADP</text>
        <dbReference type="Rhea" id="RHEA:24036"/>
        <dbReference type="ChEBI" id="CHEBI:30616"/>
        <dbReference type="ChEBI" id="CHEBI:57930"/>
        <dbReference type="ChEBI" id="CHEBI:58043"/>
        <dbReference type="ChEBI" id="CHEBI:456216"/>
        <dbReference type="EC" id="2.7.4.4"/>
    </reaction>
</comment>
<comment type="catalytic activity">
    <reaction evidence="1 4">
        <text>AMP + ATP = 2 ADP</text>
        <dbReference type="Rhea" id="RHEA:12973"/>
        <dbReference type="ChEBI" id="CHEBI:30616"/>
        <dbReference type="ChEBI" id="CHEBI:456215"/>
        <dbReference type="ChEBI" id="CHEBI:456216"/>
        <dbReference type="EC" id="2.7.4.3"/>
    </reaction>
</comment>
<comment type="catalytic activity">
    <reaction evidence="1">
        <text>dAMP + ATP = dADP + ADP</text>
        <dbReference type="Rhea" id="RHEA:23100"/>
        <dbReference type="ChEBI" id="CHEBI:30616"/>
        <dbReference type="ChEBI" id="CHEBI:57667"/>
        <dbReference type="ChEBI" id="CHEBI:58245"/>
        <dbReference type="ChEBI" id="CHEBI:456216"/>
    </reaction>
</comment>
<comment type="catalytic activity">
    <reaction evidence="3">
        <text>dATP + AMP = dADP + ADP</text>
        <dbReference type="Rhea" id="RHEA:79899"/>
        <dbReference type="ChEBI" id="CHEBI:57667"/>
        <dbReference type="ChEBI" id="CHEBI:61404"/>
        <dbReference type="ChEBI" id="CHEBI:456215"/>
        <dbReference type="ChEBI" id="CHEBI:456216"/>
    </reaction>
</comment>
<comment type="catalytic activity">
    <reaction evidence="3">
        <text>dAMP + dATP = 2 dADP</text>
        <dbReference type="Rhea" id="RHEA:78311"/>
        <dbReference type="ChEBI" id="CHEBI:57667"/>
        <dbReference type="ChEBI" id="CHEBI:58245"/>
        <dbReference type="ChEBI" id="CHEBI:61404"/>
    </reaction>
</comment>
<comment type="catalytic activity">
    <reaction evidence="1 4">
        <text>a 2'-deoxyribonucleoside 5'-diphosphate + ATP = a 2'-deoxyribonucleoside 5'-triphosphate + ADP</text>
        <dbReference type="Rhea" id="RHEA:44640"/>
        <dbReference type="ChEBI" id="CHEBI:30616"/>
        <dbReference type="ChEBI" id="CHEBI:61560"/>
        <dbReference type="ChEBI" id="CHEBI:73316"/>
        <dbReference type="ChEBI" id="CHEBI:456216"/>
        <dbReference type="EC" id="2.7.4.6"/>
    </reaction>
</comment>
<comment type="catalytic activity">
    <reaction evidence="1">
        <text>a ribonucleoside 5'-diphosphate + ATP = a ribonucleoside 5'-triphosphate + ADP</text>
        <dbReference type="Rhea" id="RHEA:18113"/>
        <dbReference type="ChEBI" id="CHEBI:30616"/>
        <dbReference type="ChEBI" id="CHEBI:57930"/>
        <dbReference type="ChEBI" id="CHEBI:61557"/>
        <dbReference type="ChEBI" id="CHEBI:456216"/>
        <dbReference type="EC" id="2.7.4.6"/>
    </reaction>
</comment>
<comment type="catalytic activity">
    <reaction evidence="1">
        <text>CDP + GTP = CTP + GDP</text>
        <dbReference type="Rhea" id="RHEA:79859"/>
        <dbReference type="ChEBI" id="CHEBI:37563"/>
        <dbReference type="ChEBI" id="CHEBI:37565"/>
        <dbReference type="ChEBI" id="CHEBI:58069"/>
        <dbReference type="ChEBI" id="CHEBI:58189"/>
    </reaction>
</comment>
<comment type="catalytic activity">
    <reaction evidence="1">
        <text>GDP + ATP = GTP + ADP</text>
        <dbReference type="Rhea" id="RHEA:27686"/>
        <dbReference type="ChEBI" id="CHEBI:30616"/>
        <dbReference type="ChEBI" id="CHEBI:37565"/>
        <dbReference type="ChEBI" id="CHEBI:58189"/>
        <dbReference type="ChEBI" id="CHEBI:456216"/>
        <dbReference type="EC" id="2.7.4.6"/>
    </reaction>
</comment>
<comment type="catalytic activity">
    <reaction evidence="1">
        <text>UDP + ATP = UTP + ADP</text>
        <dbReference type="Rhea" id="RHEA:25098"/>
        <dbReference type="ChEBI" id="CHEBI:30616"/>
        <dbReference type="ChEBI" id="CHEBI:46398"/>
        <dbReference type="ChEBI" id="CHEBI:58223"/>
        <dbReference type="ChEBI" id="CHEBI:456216"/>
        <dbReference type="EC" id="2.7.4.6"/>
    </reaction>
</comment>
<comment type="catalytic activity">
    <reaction evidence="1">
        <text>GTP + UDP = UTP + GDP</text>
        <dbReference type="Rhea" id="RHEA:79863"/>
        <dbReference type="ChEBI" id="CHEBI:37565"/>
        <dbReference type="ChEBI" id="CHEBI:46398"/>
        <dbReference type="ChEBI" id="CHEBI:58189"/>
        <dbReference type="ChEBI" id="CHEBI:58223"/>
    </reaction>
</comment>
<comment type="catalytic activity">
    <reaction evidence="1">
        <text>dTDP + GTP = dTTP + GDP</text>
        <dbReference type="Rhea" id="RHEA:79867"/>
        <dbReference type="ChEBI" id="CHEBI:37565"/>
        <dbReference type="ChEBI" id="CHEBI:37568"/>
        <dbReference type="ChEBI" id="CHEBI:58189"/>
        <dbReference type="ChEBI" id="CHEBI:58369"/>
    </reaction>
</comment>
<comment type="catalytic activity">
    <reaction evidence="1">
        <text>dCDP + GTP = dCTP + GDP</text>
        <dbReference type="Rhea" id="RHEA:79875"/>
        <dbReference type="ChEBI" id="CHEBI:37565"/>
        <dbReference type="ChEBI" id="CHEBI:58189"/>
        <dbReference type="ChEBI" id="CHEBI:58593"/>
        <dbReference type="ChEBI" id="CHEBI:61481"/>
    </reaction>
</comment>
<comment type="catalytic activity">
    <reaction evidence="1">
        <text>dGDP + ATP = dGTP + ADP</text>
        <dbReference type="Rhea" id="RHEA:27690"/>
        <dbReference type="ChEBI" id="CHEBI:30616"/>
        <dbReference type="ChEBI" id="CHEBI:58595"/>
        <dbReference type="ChEBI" id="CHEBI:61429"/>
        <dbReference type="ChEBI" id="CHEBI:456216"/>
        <dbReference type="EC" id="2.7.4.6"/>
    </reaction>
</comment>
<comment type="catalytic activity">
    <reaction evidence="1">
        <text>dADP + GTP = dATP + GDP</text>
        <dbReference type="Rhea" id="RHEA:79871"/>
        <dbReference type="ChEBI" id="CHEBI:37565"/>
        <dbReference type="ChEBI" id="CHEBI:57667"/>
        <dbReference type="ChEBI" id="CHEBI:58189"/>
        <dbReference type="ChEBI" id="CHEBI:61404"/>
    </reaction>
</comment>
<comment type="catalytic activity">
    <reaction evidence="3">
        <text>thiamine diphosphate + ADP = thiamine triphosphate + AMP</text>
        <dbReference type="Rhea" id="RHEA:69180"/>
        <dbReference type="ChEBI" id="CHEBI:58937"/>
        <dbReference type="ChEBI" id="CHEBI:58938"/>
        <dbReference type="ChEBI" id="CHEBI:456215"/>
        <dbReference type="ChEBI" id="CHEBI:456216"/>
    </reaction>
</comment>
<comment type="cofactor">
    <cofactor evidence="3">
        <name>Mg(2+)</name>
        <dbReference type="ChEBI" id="CHEBI:18420"/>
    </cofactor>
</comment>
<comment type="subunit">
    <text evidence="1 4">Monomer.</text>
</comment>
<comment type="subcellular location">
    <subcellularLocation>
        <location evidence="1 4">Cytoplasm</location>
    </subcellularLocation>
</comment>
<comment type="domain">
    <text evidence="1 4">Consists of three domains, a large central CORE domain and two small peripheral domains, NMPbind and LID, which undergo movements during catalysis. The LID domain closes over the site of phosphoryl transfer upon ATP binding. Assembling and dissambling the active center during each catalytic cycle provides an effective means to prevent ATP hydrolysis.</text>
</comment>
<comment type="similarity">
    <text evidence="5">Belongs to the adenylate kinase family. AK1 subfamily.</text>
</comment>
<reference key="1">
    <citation type="journal article" date="2010" name="Asian J. Androl.">
        <title>Glucose-regulated protein precursor (GRP78) and tumor rejection antigen (GP96) are unique to hamster caput epididymal spermatozoa.</title>
        <authorList>
            <person name="Kameshwari D.B."/>
            <person name="Bhande S."/>
            <person name="Sundaram C.S."/>
            <person name="Kota V."/>
            <person name="Siva A.B."/>
            <person name="Shivaji S."/>
        </authorList>
    </citation>
    <scope>IDENTIFICATION BY MASS SPECTROMETRY</scope>
</reference>
<accession>P86195</accession>
<evidence type="ECO:0000250" key="1">
    <source>
        <dbReference type="UniProtKB" id="P00568"/>
    </source>
</evidence>
<evidence type="ECO:0000250" key="2">
    <source>
        <dbReference type="UniProtKB" id="P00571"/>
    </source>
</evidence>
<evidence type="ECO:0000250" key="3">
    <source>
        <dbReference type="UniProtKB" id="P05081"/>
    </source>
</evidence>
<evidence type="ECO:0000255" key="4">
    <source>
        <dbReference type="HAMAP-Rule" id="MF_03171"/>
    </source>
</evidence>
<evidence type="ECO:0000305" key="5"/>